<accession>B7MVA0</accession>
<keyword id="KW-0378">Hydrolase</keyword>
<keyword id="KW-0479">Metal-binding</keyword>
<keyword id="KW-0546">Nucleotide metabolism</keyword>
<keyword id="KW-0862">Zinc</keyword>
<dbReference type="EC" id="3.5.4.4" evidence="1"/>
<dbReference type="EMBL" id="CU928162">
    <property type="protein sequence ID" value="CAR08016.2"/>
    <property type="molecule type" value="Genomic_DNA"/>
</dbReference>
<dbReference type="RefSeq" id="WP_000567470.1">
    <property type="nucleotide sequence ID" value="NC_011745.1"/>
</dbReference>
<dbReference type="SMR" id="B7MVA0"/>
<dbReference type="KEGG" id="ecq:ECED1_1823"/>
<dbReference type="HOGENOM" id="CLU_039228_0_2_6"/>
<dbReference type="Proteomes" id="UP000000748">
    <property type="component" value="Chromosome"/>
</dbReference>
<dbReference type="GO" id="GO:0005829">
    <property type="term" value="C:cytosol"/>
    <property type="evidence" value="ECO:0007669"/>
    <property type="project" value="TreeGrafter"/>
</dbReference>
<dbReference type="GO" id="GO:0046936">
    <property type="term" value="F:2'-deoxyadenosine deaminase activity"/>
    <property type="evidence" value="ECO:0007669"/>
    <property type="project" value="RHEA"/>
</dbReference>
<dbReference type="GO" id="GO:0004000">
    <property type="term" value="F:adenosine deaminase activity"/>
    <property type="evidence" value="ECO:0007669"/>
    <property type="project" value="UniProtKB-UniRule"/>
</dbReference>
<dbReference type="GO" id="GO:0008270">
    <property type="term" value="F:zinc ion binding"/>
    <property type="evidence" value="ECO:0007669"/>
    <property type="project" value="UniProtKB-UniRule"/>
</dbReference>
<dbReference type="GO" id="GO:0006154">
    <property type="term" value="P:adenosine catabolic process"/>
    <property type="evidence" value="ECO:0007669"/>
    <property type="project" value="TreeGrafter"/>
</dbReference>
<dbReference type="GO" id="GO:0043103">
    <property type="term" value="P:hypoxanthine salvage"/>
    <property type="evidence" value="ECO:0007669"/>
    <property type="project" value="TreeGrafter"/>
</dbReference>
<dbReference type="GO" id="GO:0046103">
    <property type="term" value="P:inosine biosynthetic process"/>
    <property type="evidence" value="ECO:0007669"/>
    <property type="project" value="TreeGrafter"/>
</dbReference>
<dbReference type="GO" id="GO:0009117">
    <property type="term" value="P:nucleotide metabolic process"/>
    <property type="evidence" value="ECO:0007669"/>
    <property type="project" value="UniProtKB-KW"/>
</dbReference>
<dbReference type="GO" id="GO:0009168">
    <property type="term" value="P:purine ribonucleoside monophosphate biosynthetic process"/>
    <property type="evidence" value="ECO:0007669"/>
    <property type="project" value="UniProtKB-UniRule"/>
</dbReference>
<dbReference type="CDD" id="cd01320">
    <property type="entry name" value="ADA"/>
    <property type="match status" value="1"/>
</dbReference>
<dbReference type="FunFam" id="3.20.20.140:FF:000009">
    <property type="entry name" value="Adenosine deaminase"/>
    <property type="match status" value="1"/>
</dbReference>
<dbReference type="Gene3D" id="3.20.20.140">
    <property type="entry name" value="Metal-dependent hydrolases"/>
    <property type="match status" value="1"/>
</dbReference>
<dbReference type="HAMAP" id="MF_00540">
    <property type="entry name" value="A_deaminase"/>
    <property type="match status" value="1"/>
</dbReference>
<dbReference type="InterPro" id="IPR006650">
    <property type="entry name" value="A/AMP_deam_AS"/>
</dbReference>
<dbReference type="InterPro" id="IPR028893">
    <property type="entry name" value="A_deaminase"/>
</dbReference>
<dbReference type="InterPro" id="IPR001365">
    <property type="entry name" value="A_deaminase_dom"/>
</dbReference>
<dbReference type="InterPro" id="IPR006330">
    <property type="entry name" value="Ado/ade_deaminase"/>
</dbReference>
<dbReference type="InterPro" id="IPR032466">
    <property type="entry name" value="Metal_Hydrolase"/>
</dbReference>
<dbReference type="NCBIfam" id="TIGR01430">
    <property type="entry name" value="aden_deam"/>
    <property type="match status" value="1"/>
</dbReference>
<dbReference type="NCBIfam" id="NF006846">
    <property type="entry name" value="PRK09358.1-1"/>
    <property type="match status" value="1"/>
</dbReference>
<dbReference type="PANTHER" id="PTHR11409">
    <property type="entry name" value="ADENOSINE DEAMINASE"/>
    <property type="match status" value="1"/>
</dbReference>
<dbReference type="PANTHER" id="PTHR11409:SF43">
    <property type="entry name" value="ADENOSINE DEAMINASE"/>
    <property type="match status" value="1"/>
</dbReference>
<dbReference type="Pfam" id="PF00962">
    <property type="entry name" value="A_deaminase"/>
    <property type="match status" value="1"/>
</dbReference>
<dbReference type="SUPFAM" id="SSF51556">
    <property type="entry name" value="Metallo-dependent hydrolases"/>
    <property type="match status" value="1"/>
</dbReference>
<dbReference type="PROSITE" id="PS00485">
    <property type="entry name" value="A_DEAMINASE"/>
    <property type="match status" value="1"/>
</dbReference>
<reference key="1">
    <citation type="journal article" date="2009" name="PLoS Genet.">
        <title>Organised genome dynamics in the Escherichia coli species results in highly diverse adaptive paths.</title>
        <authorList>
            <person name="Touchon M."/>
            <person name="Hoede C."/>
            <person name="Tenaillon O."/>
            <person name="Barbe V."/>
            <person name="Baeriswyl S."/>
            <person name="Bidet P."/>
            <person name="Bingen E."/>
            <person name="Bonacorsi S."/>
            <person name="Bouchier C."/>
            <person name="Bouvet O."/>
            <person name="Calteau A."/>
            <person name="Chiapello H."/>
            <person name="Clermont O."/>
            <person name="Cruveiller S."/>
            <person name="Danchin A."/>
            <person name="Diard M."/>
            <person name="Dossat C."/>
            <person name="Karoui M.E."/>
            <person name="Frapy E."/>
            <person name="Garry L."/>
            <person name="Ghigo J.M."/>
            <person name="Gilles A.M."/>
            <person name="Johnson J."/>
            <person name="Le Bouguenec C."/>
            <person name="Lescat M."/>
            <person name="Mangenot S."/>
            <person name="Martinez-Jehanne V."/>
            <person name="Matic I."/>
            <person name="Nassif X."/>
            <person name="Oztas S."/>
            <person name="Petit M.A."/>
            <person name="Pichon C."/>
            <person name="Rouy Z."/>
            <person name="Ruf C.S."/>
            <person name="Schneider D."/>
            <person name="Tourret J."/>
            <person name="Vacherie B."/>
            <person name="Vallenet D."/>
            <person name="Medigue C."/>
            <person name="Rocha E.P.C."/>
            <person name="Denamur E."/>
        </authorList>
    </citation>
    <scope>NUCLEOTIDE SEQUENCE [LARGE SCALE GENOMIC DNA]</scope>
    <source>
        <strain>ED1a</strain>
    </source>
</reference>
<sequence>MIDTTLPLTDIHRHLDGNIRPQTILELGRQYNILLPAQSLETLIPHVQVIANEPDLVSFLTKLDWGVKVLASLDACRRVAFENIEDAARNGLHYVELHFSPGYMAMAHQLPVAGVVEAVIDGVREGCRTFGVQAKLIGIMSRTFGEAACQQELEAFLAHRDQITALDLAGDKLGFPGSLFLSHFNRARDAGWHITVHAGEAAGPESIWQAIRELGAERIGHGVKAIEDRALMDFLAEQQIGIESCLTSNIQTSTVADLAAHPLKTFLEHGIRASINTDDPGVQGVDIIHEYTVAAPAAGLSREQIRQAQINGLEMAFLSAEEKRALREKVAAK</sequence>
<feature type="chain" id="PRO_1000146572" description="Adenosine deaminase">
    <location>
        <begin position="1"/>
        <end position="333"/>
    </location>
</feature>
<feature type="active site" description="Proton donor" evidence="1">
    <location>
        <position position="200"/>
    </location>
</feature>
<feature type="binding site" evidence="1">
    <location>
        <position position="12"/>
    </location>
    <ligand>
        <name>Zn(2+)</name>
        <dbReference type="ChEBI" id="CHEBI:29105"/>
        <note>catalytic</note>
    </ligand>
</feature>
<feature type="binding site" evidence="1">
    <location>
        <position position="14"/>
    </location>
    <ligand>
        <name>substrate</name>
    </ligand>
</feature>
<feature type="binding site" evidence="1">
    <location>
        <position position="14"/>
    </location>
    <ligand>
        <name>Zn(2+)</name>
        <dbReference type="ChEBI" id="CHEBI:29105"/>
        <note>catalytic</note>
    </ligand>
</feature>
<feature type="binding site" evidence="1">
    <location>
        <position position="16"/>
    </location>
    <ligand>
        <name>substrate</name>
    </ligand>
</feature>
<feature type="binding site" evidence="1">
    <location>
        <position position="170"/>
    </location>
    <ligand>
        <name>substrate</name>
    </ligand>
</feature>
<feature type="binding site" evidence="1">
    <location>
        <position position="197"/>
    </location>
    <ligand>
        <name>Zn(2+)</name>
        <dbReference type="ChEBI" id="CHEBI:29105"/>
        <note>catalytic</note>
    </ligand>
</feature>
<feature type="binding site" evidence="1">
    <location>
        <position position="278"/>
    </location>
    <ligand>
        <name>Zn(2+)</name>
        <dbReference type="ChEBI" id="CHEBI:29105"/>
        <note>catalytic</note>
    </ligand>
</feature>
<feature type="binding site" evidence="1">
    <location>
        <position position="279"/>
    </location>
    <ligand>
        <name>substrate</name>
    </ligand>
</feature>
<feature type="site" description="Important for catalytic activity" evidence="1">
    <location>
        <position position="221"/>
    </location>
</feature>
<comment type="function">
    <text evidence="1">Catalyzes the hydrolytic deamination of adenosine and 2-deoxyadenosine.</text>
</comment>
<comment type="catalytic activity">
    <reaction evidence="1">
        <text>adenosine + H2O + H(+) = inosine + NH4(+)</text>
        <dbReference type="Rhea" id="RHEA:24408"/>
        <dbReference type="ChEBI" id="CHEBI:15377"/>
        <dbReference type="ChEBI" id="CHEBI:15378"/>
        <dbReference type="ChEBI" id="CHEBI:16335"/>
        <dbReference type="ChEBI" id="CHEBI:17596"/>
        <dbReference type="ChEBI" id="CHEBI:28938"/>
        <dbReference type="EC" id="3.5.4.4"/>
    </reaction>
    <physiologicalReaction direction="left-to-right" evidence="1">
        <dbReference type="Rhea" id="RHEA:24409"/>
    </physiologicalReaction>
</comment>
<comment type="catalytic activity">
    <reaction evidence="1">
        <text>2'-deoxyadenosine + H2O + H(+) = 2'-deoxyinosine + NH4(+)</text>
        <dbReference type="Rhea" id="RHEA:28190"/>
        <dbReference type="ChEBI" id="CHEBI:15377"/>
        <dbReference type="ChEBI" id="CHEBI:15378"/>
        <dbReference type="ChEBI" id="CHEBI:17256"/>
        <dbReference type="ChEBI" id="CHEBI:28938"/>
        <dbReference type="ChEBI" id="CHEBI:28997"/>
        <dbReference type="EC" id="3.5.4.4"/>
    </reaction>
    <physiologicalReaction direction="left-to-right" evidence="1">
        <dbReference type="Rhea" id="RHEA:28191"/>
    </physiologicalReaction>
</comment>
<comment type="cofactor">
    <cofactor evidence="1">
        <name>Zn(2+)</name>
        <dbReference type="ChEBI" id="CHEBI:29105"/>
    </cofactor>
    <text evidence="1">Binds 1 zinc ion per subunit.</text>
</comment>
<comment type="similarity">
    <text evidence="1">Belongs to the metallo-dependent hydrolases superfamily. Adenosine and AMP deaminases family. Adenosine deaminase subfamily.</text>
</comment>
<organism>
    <name type="scientific">Escherichia coli O81 (strain ED1a)</name>
    <dbReference type="NCBI Taxonomy" id="585397"/>
    <lineage>
        <taxon>Bacteria</taxon>
        <taxon>Pseudomonadati</taxon>
        <taxon>Pseudomonadota</taxon>
        <taxon>Gammaproteobacteria</taxon>
        <taxon>Enterobacterales</taxon>
        <taxon>Enterobacteriaceae</taxon>
        <taxon>Escherichia</taxon>
    </lineage>
</organism>
<name>ADD_ECO81</name>
<protein>
    <recommendedName>
        <fullName evidence="1">Adenosine deaminase</fullName>
        <ecNumber evidence="1">3.5.4.4</ecNumber>
    </recommendedName>
    <alternativeName>
        <fullName evidence="1">Adenosine aminohydrolase</fullName>
    </alternativeName>
</protein>
<gene>
    <name evidence="1" type="primary">add</name>
    <name type="ordered locus">ECED1_1823</name>
</gene>
<evidence type="ECO:0000255" key="1">
    <source>
        <dbReference type="HAMAP-Rule" id="MF_00540"/>
    </source>
</evidence>
<proteinExistence type="inferred from homology"/>